<feature type="chain" id="PRO_1000206561" description="Large ribosomal subunit protein bL9">
    <location>
        <begin position="1"/>
        <end position="171"/>
    </location>
</feature>
<evidence type="ECO:0000255" key="1">
    <source>
        <dbReference type="HAMAP-Rule" id="MF_00503"/>
    </source>
</evidence>
<evidence type="ECO:0000305" key="2"/>
<accession>C4K161</accession>
<name>RL9_RICPU</name>
<keyword id="KW-0687">Ribonucleoprotein</keyword>
<keyword id="KW-0689">Ribosomal protein</keyword>
<keyword id="KW-0694">RNA-binding</keyword>
<keyword id="KW-0699">rRNA-binding</keyword>
<proteinExistence type="inferred from homology"/>
<gene>
    <name evidence="1" type="primary">rplI</name>
    <name type="ordered locus">RPR_02385</name>
</gene>
<comment type="function">
    <text evidence="1">Binds to the 23S rRNA.</text>
</comment>
<comment type="similarity">
    <text evidence="1">Belongs to the bacterial ribosomal protein bL9 family.</text>
</comment>
<protein>
    <recommendedName>
        <fullName evidence="1">Large ribosomal subunit protein bL9</fullName>
    </recommendedName>
    <alternativeName>
        <fullName evidence="2">50S ribosomal protein L9</fullName>
    </alternativeName>
</protein>
<reference key="1">
    <citation type="journal article" date="2009" name="PLoS ONE">
        <title>Genome sequence of the endosymbiont Rickettsia peacockii and comparison with virulent Rickettsia rickettsii: identification of virulence factors.</title>
        <authorList>
            <person name="Felsheim R.F."/>
            <person name="Kurtti T.J."/>
            <person name="Munderloh U.G."/>
        </authorList>
    </citation>
    <scope>NUCLEOTIDE SEQUENCE [LARGE SCALE GENOMIC DNA]</scope>
    <source>
        <strain>Rustic</strain>
    </source>
</reference>
<sequence>MEIILIKPVRKLGKIGDILKVADGFGRNYLLPQKLAIRATEPNKELIVKQKHEFEAKDKQIREEVEKINALIKDQQLVFIRQTSNDGKLFGSVTNKEIADKLSENISYNISHSNIILDKQIKSTGIYTVEIRLHAELNAIVTVIVARSESEAQDYLREQKTETSEDLAESA</sequence>
<dbReference type="EMBL" id="CP001227">
    <property type="protein sequence ID" value="ACR47312.1"/>
    <property type="molecule type" value="Genomic_DNA"/>
</dbReference>
<dbReference type="RefSeq" id="WP_004996862.1">
    <property type="nucleotide sequence ID" value="NC_012730.1"/>
</dbReference>
<dbReference type="SMR" id="C4K161"/>
<dbReference type="GeneID" id="95361798"/>
<dbReference type="KEGG" id="rpk:RPR_02385"/>
<dbReference type="HOGENOM" id="CLU_078938_3_0_5"/>
<dbReference type="Proteomes" id="UP000005015">
    <property type="component" value="Chromosome"/>
</dbReference>
<dbReference type="GO" id="GO:1990904">
    <property type="term" value="C:ribonucleoprotein complex"/>
    <property type="evidence" value="ECO:0007669"/>
    <property type="project" value="UniProtKB-KW"/>
</dbReference>
<dbReference type="GO" id="GO:0005840">
    <property type="term" value="C:ribosome"/>
    <property type="evidence" value="ECO:0007669"/>
    <property type="project" value="UniProtKB-KW"/>
</dbReference>
<dbReference type="GO" id="GO:0019843">
    <property type="term" value="F:rRNA binding"/>
    <property type="evidence" value="ECO:0007669"/>
    <property type="project" value="UniProtKB-UniRule"/>
</dbReference>
<dbReference type="GO" id="GO:0003735">
    <property type="term" value="F:structural constituent of ribosome"/>
    <property type="evidence" value="ECO:0007669"/>
    <property type="project" value="InterPro"/>
</dbReference>
<dbReference type="GO" id="GO:0006412">
    <property type="term" value="P:translation"/>
    <property type="evidence" value="ECO:0007669"/>
    <property type="project" value="UniProtKB-UniRule"/>
</dbReference>
<dbReference type="Gene3D" id="3.10.430.100">
    <property type="entry name" value="Ribosomal protein L9, C-terminal domain"/>
    <property type="match status" value="1"/>
</dbReference>
<dbReference type="Gene3D" id="3.40.5.10">
    <property type="entry name" value="Ribosomal protein L9, N-terminal domain"/>
    <property type="match status" value="1"/>
</dbReference>
<dbReference type="HAMAP" id="MF_00503">
    <property type="entry name" value="Ribosomal_bL9"/>
    <property type="match status" value="1"/>
</dbReference>
<dbReference type="InterPro" id="IPR000244">
    <property type="entry name" value="Ribosomal_bL9"/>
</dbReference>
<dbReference type="InterPro" id="IPR009027">
    <property type="entry name" value="Ribosomal_bL9/RNase_H1_N"/>
</dbReference>
<dbReference type="InterPro" id="IPR020594">
    <property type="entry name" value="Ribosomal_bL9_bac/chp"/>
</dbReference>
<dbReference type="InterPro" id="IPR020069">
    <property type="entry name" value="Ribosomal_bL9_C"/>
</dbReference>
<dbReference type="InterPro" id="IPR036791">
    <property type="entry name" value="Ribosomal_bL9_C_sf"/>
</dbReference>
<dbReference type="InterPro" id="IPR020070">
    <property type="entry name" value="Ribosomal_bL9_N"/>
</dbReference>
<dbReference type="InterPro" id="IPR036935">
    <property type="entry name" value="Ribosomal_bL9_N_sf"/>
</dbReference>
<dbReference type="NCBIfam" id="TIGR00158">
    <property type="entry name" value="L9"/>
    <property type="match status" value="1"/>
</dbReference>
<dbReference type="PANTHER" id="PTHR21368">
    <property type="entry name" value="50S RIBOSOMAL PROTEIN L9"/>
    <property type="match status" value="1"/>
</dbReference>
<dbReference type="Pfam" id="PF03948">
    <property type="entry name" value="Ribosomal_L9_C"/>
    <property type="match status" value="1"/>
</dbReference>
<dbReference type="Pfam" id="PF01281">
    <property type="entry name" value="Ribosomal_L9_N"/>
    <property type="match status" value="1"/>
</dbReference>
<dbReference type="SUPFAM" id="SSF55658">
    <property type="entry name" value="L9 N-domain-like"/>
    <property type="match status" value="1"/>
</dbReference>
<dbReference type="SUPFAM" id="SSF55653">
    <property type="entry name" value="Ribosomal protein L9 C-domain"/>
    <property type="match status" value="1"/>
</dbReference>
<dbReference type="PROSITE" id="PS00651">
    <property type="entry name" value="RIBOSOMAL_L9"/>
    <property type="match status" value="1"/>
</dbReference>
<organism>
    <name type="scientific">Rickettsia peacockii (strain Rustic)</name>
    <dbReference type="NCBI Taxonomy" id="562019"/>
    <lineage>
        <taxon>Bacteria</taxon>
        <taxon>Pseudomonadati</taxon>
        <taxon>Pseudomonadota</taxon>
        <taxon>Alphaproteobacteria</taxon>
        <taxon>Rickettsiales</taxon>
        <taxon>Rickettsiaceae</taxon>
        <taxon>Rickettsieae</taxon>
        <taxon>Rickettsia</taxon>
        <taxon>spotted fever group</taxon>
    </lineage>
</organism>